<sequence>MKNNLRYGIRKHKLGAASVFLGTMIVVGMGQDKEAAASEQKTTTVEENGNSATDNKTSETQTTATNVNHIEETQSYNATVTEQPSNATQVTTEEAPKAVQAPQTAQPANVETVKEEEKPQVKETTQPQDNSGNQRQVDLTPKKVTQNQGTETQVEVAQPRTASESKPRVTRSADVAEAKEASDVSEVKGTDVTSKVTVESGSIEAPQGNKVEPHAGQRVVLKYKLKFADGLKRGDYFDFTLSNNVNTYGVSTARKVPEIKNGSVVMATGEILGNGNIRYTFTNEIEHKVEVTANLEINLFIDPKTVQSNGEQKITSKLNGEETEKTIPVVYNPGVSNSYTNVNGSIETFNKESNKFTHIAYIKPMNGNQSNTVSVTGTLTEGSNLAGGQPTVKVYEYLGKKDELPQSVYANTSDTNKFKDVTKEMNGKLSVQDNGSYSLNLDKLDKTYVIHYTGEYLQGSDQVNFRTELYGYPERAYKSYYVYGGYRLTWDNGLVLYSNKADGNGKNGQIIQDNDFEYKEDTAKGTMSGQYDAKQIIETEENQDNTPLDIDYHTAIDGEGGYVDGYIETIEETDSSAIDIDYHTAVDSEVGHVGGYTESSEESNPIDFEESTHENSKHHADVVEYEEDTNPGGGQVTTESNLVEFDEESTKGIVTGAVSDHTTIEDTKEYTTESNLIELVDELPEEHGQAQGPIEEITENNHHISHSGLGTENGHGNYGVIEEIEENSHVDIKSELGYEGGQNSGNQSFEEDTEEDKPKYEQGGNIVDIDFDSVPQIHGQNKGDQSFEEDTEKDKPKYEHGGNIIDIDFDSVPQIHGFNKHNEIIEEDTNKDKPNYQFGGHNSVDFEEDTLPKVSGQNEGQQTIEEDTTPPTPPTPEVPSEPETPMPPTPEVPSEPETPTPPTPEVPSEPETPTPPTPEVPSEPETPTPPTPEVPSEPETPTPPTPEVPAEPGKPVPPAKEEPKKPSKPVEQGKVVTPVIEINEKVKAVAPTKKAQSKKSELPETGGEESTNKGMLFGGLFSILGLALLRRNKKNNKA</sequence>
<proteinExistence type="inferred from homology"/>
<evidence type="ECO:0000250" key="1"/>
<evidence type="ECO:0000250" key="2">
    <source>
        <dbReference type="UniProtKB" id="P14738"/>
    </source>
</evidence>
<evidence type="ECO:0000255" key="3"/>
<evidence type="ECO:0000255" key="4">
    <source>
        <dbReference type="PROSITE-ProRule" id="PRU00477"/>
    </source>
</evidence>
<evidence type="ECO:0000256" key="5">
    <source>
        <dbReference type="SAM" id="MobiDB-lite"/>
    </source>
</evidence>
<reference key="1">
    <citation type="journal article" date="2001" name="Lancet">
        <title>Whole genome sequencing of meticillin-resistant Staphylococcus aureus.</title>
        <authorList>
            <person name="Kuroda M."/>
            <person name="Ohta T."/>
            <person name="Uchiyama I."/>
            <person name="Baba T."/>
            <person name="Yuzawa H."/>
            <person name="Kobayashi I."/>
            <person name="Cui L."/>
            <person name="Oguchi A."/>
            <person name="Aoki K."/>
            <person name="Nagai Y."/>
            <person name="Lian J.-Q."/>
            <person name="Ito T."/>
            <person name="Kanamori M."/>
            <person name="Matsumaru H."/>
            <person name="Maruyama A."/>
            <person name="Murakami H."/>
            <person name="Hosoyama A."/>
            <person name="Mizutani-Ui Y."/>
            <person name="Takahashi N.K."/>
            <person name="Sawano T."/>
            <person name="Inoue R."/>
            <person name="Kaito C."/>
            <person name="Sekimizu K."/>
            <person name="Hirakawa H."/>
            <person name="Kuhara S."/>
            <person name="Goto S."/>
            <person name="Yabuzaki J."/>
            <person name="Kanehisa M."/>
            <person name="Yamashita A."/>
            <person name="Oshima K."/>
            <person name="Furuya K."/>
            <person name="Yoshino C."/>
            <person name="Shiba T."/>
            <person name="Hattori M."/>
            <person name="Ogasawara N."/>
            <person name="Hayashi H."/>
            <person name="Hiramatsu K."/>
        </authorList>
    </citation>
    <scope>NUCLEOTIDE SEQUENCE [LARGE SCALE GENOMIC DNA]</scope>
    <source>
        <strain>N315</strain>
    </source>
</reference>
<dbReference type="EMBL" id="BA000018">
    <property type="protein sequence ID" value="BAB43594.1"/>
    <property type="molecule type" value="Genomic_DNA"/>
</dbReference>
<dbReference type="PIR" id="H90053">
    <property type="entry name" value="H90053"/>
</dbReference>
<dbReference type="RefSeq" id="WP_000794614.1">
    <property type="nucleotide sequence ID" value="NC_002745.2"/>
</dbReference>
<dbReference type="SMR" id="Q7A3J7"/>
<dbReference type="EnsemblBacteria" id="BAB43594">
    <property type="protein sequence ID" value="BAB43594"/>
    <property type="gene ID" value="BAB43594"/>
</dbReference>
<dbReference type="KEGG" id="sau:SA2291"/>
<dbReference type="HOGENOM" id="CLU_009849_1_0_9"/>
<dbReference type="GO" id="GO:0005576">
    <property type="term" value="C:extracellular region"/>
    <property type="evidence" value="ECO:0007669"/>
    <property type="project" value="UniProtKB-KW"/>
</dbReference>
<dbReference type="GO" id="GO:0007155">
    <property type="term" value="P:cell adhesion"/>
    <property type="evidence" value="ECO:0007669"/>
    <property type="project" value="UniProtKB-KW"/>
</dbReference>
<dbReference type="Gene3D" id="2.60.40.1280">
    <property type="match status" value="1"/>
</dbReference>
<dbReference type="Gene3D" id="2.60.40.1290">
    <property type="match status" value="1"/>
</dbReference>
<dbReference type="InterPro" id="IPR011266">
    <property type="entry name" value="Adhesin_Fg-bd_dom_2"/>
</dbReference>
<dbReference type="InterPro" id="IPR008966">
    <property type="entry name" value="Adhesion_dom_sf"/>
</dbReference>
<dbReference type="InterPro" id="IPR011252">
    <property type="entry name" value="Fibrogen-bd_dom1"/>
</dbReference>
<dbReference type="InterPro" id="IPR004237">
    <property type="entry name" value="Fibron_repeat-bd"/>
</dbReference>
<dbReference type="InterPro" id="IPR019931">
    <property type="entry name" value="LPXTG_anchor"/>
</dbReference>
<dbReference type="InterPro" id="IPR041171">
    <property type="entry name" value="SDR_Ig"/>
</dbReference>
<dbReference type="InterPro" id="IPR005877">
    <property type="entry name" value="YSIRK_signal_dom"/>
</dbReference>
<dbReference type="NCBIfam" id="TIGR01167">
    <property type="entry name" value="LPXTG_anchor"/>
    <property type="match status" value="1"/>
</dbReference>
<dbReference type="NCBIfam" id="TIGR01168">
    <property type="entry name" value="YSIRK_signal"/>
    <property type="match status" value="1"/>
</dbReference>
<dbReference type="PANTHER" id="PTHR24216:SF65">
    <property type="entry name" value="PAXILLIN-LIKE PROTEIN 1"/>
    <property type="match status" value="1"/>
</dbReference>
<dbReference type="PANTHER" id="PTHR24216">
    <property type="entry name" value="PAXILLIN-RELATED"/>
    <property type="match status" value="1"/>
</dbReference>
<dbReference type="Pfam" id="PF17961">
    <property type="entry name" value="Big_8"/>
    <property type="match status" value="1"/>
</dbReference>
<dbReference type="Pfam" id="PF02986">
    <property type="entry name" value="Fn_bind"/>
    <property type="match status" value="3"/>
</dbReference>
<dbReference type="Pfam" id="PF00746">
    <property type="entry name" value="Gram_pos_anchor"/>
    <property type="match status" value="1"/>
</dbReference>
<dbReference type="Pfam" id="PF10425">
    <property type="entry name" value="SdrG_C_C"/>
    <property type="match status" value="1"/>
</dbReference>
<dbReference type="Pfam" id="PF04650">
    <property type="entry name" value="YSIRK_signal"/>
    <property type="match status" value="1"/>
</dbReference>
<dbReference type="PRINTS" id="PR01217">
    <property type="entry name" value="PRICHEXTENSN"/>
</dbReference>
<dbReference type="SUPFAM" id="SSF49401">
    <property type="entry name" value="Bacterial adhesins"/>
    <property type="match status" value="2"/>
</dbReference>
<dbReference type="PROSITE" id="PS50847">
    <property type="entry name" value="GRAM_POS_ANCHORING"/>
    <property type="match status" value="1"/>
</dbReference>
<protein>
    <recommendedName>
        <fullName>Fibronectin-binding protein A</fullName>
    </recommendedName>
</protein>
<gene>
    <name type="primary">fnbA</name>
    <name type="ordered locus">SA2291</name>
</gene>
<keyword id="KW-0130">Cell adhesion</keyword>
<keyword id="KW-0134">Cell wall</keyword>
<keyword id="KW-0572">Peptidoglycan-anchor</keyword>
<keyword id="KW-0677">Repeat</keyword>
<keyword id="KW-0964">Secreted</keyword>
<keyword id="KW-0732">Signal</keyword>
<keyword id="KW-0843">Virulence</keyword>
<feature type="signal peptide" evidence="3">
    <location>
        <begin position="1"/>
        <end position="36"/>
    </location>
</feature>
<feature type="chain" id="PRO_0000313882" description="Fibronectin-binding protein A">
    <location>
        <begin position="37"/>
        <end position="1005"/>
    </location>
</feature>
<feature type="propeptide" id="PRO_0000313883" description="Removed by sortase" evidence="4">
    <location>
        <begin position="1006"/>
        <end position="1038"/>
    </location>
</feature>
<feature type="repeat" description="B-1">
    <location>
        <begin position="541"/>
        <end position="570"/>
    </location>
</feature>
<feature type="repeat" description="B-2">
    <location>
        <begin position="571"/>
        <end position="600"/>
    </location>
</feature>
<feature type="repeat" description="D-1">
    <location>
        <begin position="741"/>
        <end position="778"/>
    </location>
</feature>
<feature type="repeat" description="D-2">
    <location>
        <begin position="779"/>
        <end position="816"/>
    </location>
</feature>
<feature type="repeat" description="D-3">
    <location>
        <begin position="817"/>
        <end position="855"/>
    </location>
</feature>
<feature type="repeat" description="D-4">
    <location>
        <begin position="856"/>
        <end position="898"/>
    </location>
</feature>
<feature type="repeat" description="WR 1">
    <location>
        <begin position="899"/>
        <end position="912"/>
    </location>
</feature>
<feature type="repeat" description="WR 2">
    <location>
        <begin position="913"/>
        <end position="926"/>
    </location>
</feature>
<feature type="repeat" description="WR 3">
    <location>
        <begin position="927"/>
        <end position="940"/>
    </location>
</feature>
<feature type="repeat" description="WR 4">
    <location>
        <begin position="941"/>
        <end position="954"/>
    </location>
</feature>
<feature type="repeat" description="WR 5">
    <location>
        <begin position="955"/>
        <end position="968"/>
    </location>
</feature>
<feature type="region of interest" description="Ligand-binding A region">
    <location>
        <begin position="37"/>
        <end position="507"/>
    </location>
</feature>
<feature type="region of interest" description="Disordered" evidence="5">
    <location>
        <begin position="37"/>
        <end position="193"/>
    </location>
</feature>
<feature type="region of interest" description="Fibrinogen/elastin/tropoelastin-binding" evidence="1">
    <location>
        <begin position="189"/>
        <end position="507"/>
    </location>
</feature>
<feature type="region of interest" description="Fibronectin-binding" evidence="1">
    <location>
        <begin position="508"/>
        <end position="868"/>
    </location>
</feature>
<feature type="region of interest" description="2 X approximate tandem repeats">
    <location>
        <begin position="541"/>
        <end position="600"/>
    </location>
</feature>
<feature type="region of interest" description="Disordered" evidence="5">
    <location>
        <begin position="736"/>
        <end position="804"/>
    </location>
</feature>
<feature type="region of interest" description="4 X approximate tandem repeats">
    <location>
        <begin position="741"/>
        <end position="898"/>
    </location>
</feature>
<feature type="region of interest" description="Disordered" evidence="5">
    <location>
        <begin position="825"/>
        <end position="976"/>
    </location>
</feature>
<feature type="region of interest" description="5 X tandem repeats, Pro-rich (WR)">
    <location>
        <begin position="899"/>
        <end position="968"/>
    </location>
</feature>
<feature type="region of interest" description="Disordered" evidence="5">
    <location>
        <begin position="989"/>
        <end position="1015"/>
    </location>
</feature>
<feature type="short sequence motif" description="YSIRK-G/S signaling motif" evidence="2">
    <location>
        <begin position="7"/>
        <end position="18"/>
    </location>
</feature>
<feature type="short sequence motif" description="LPXTG sorting signal" evidence="4">
    <location>
        <begin position="1002"/>
        <end position="1006"/>
    </location>
</feature>
<feature type="compositionally biased region" description="Polar residues" evidence="5">
    <location>
        <begin position="39"/>
        <end position="92"/>
    </location>
</feature>
<feature type="compositionally biased region" description="Basic and acidic residues" evidence="5">
    <location>
        <begin position="112"/>
        <end position="121"/>
    </location>
</feature>
<feature type="compositionally biased region" description="Polar residues" evidence="5">
    <location>
        <begin position="122"/>
        <end position="164"/>
    </location>
</feature>
<feature type="compositionally biased region" description="Basic and acidic residues" evidence="5">
    <location>
        <begin position="174"/>
        <end position="189"/>
    </location>
</feature>
<feature type="compositionally biased region" description="Basic and acidic residues" evidence="5">
    <location>
        <begin position="825"/>
        <end position="834"/>
    </location>
</feature>
<feature type="compositionally biased region" description="Pro residues" evidence="5">
    <location>
        <begin position="870"/>
        <end position="958"/>
    </location>
</feature>
<feature type="modified residue" description="Pentaglycyl murein peptidoglycan amidated threonine" evidence="4">
    <location>
        <position position="1005"/>
    </location>
</feature>
<organism>
    <name type="scientific">Staphylococcus aureus (strain N315)</name>
    <dbReference type="NCBI Taxonomy" id="158879"/>
    <lineage>
        <taxon>Bacteria</taxon>
        <taxon>Bacillati</taxon>
        <taxon>Bacillota</taxon>
        <taxon>Bacilli</taxon>
        <taxon>Bacillales</taxon>
        <taxon>Staphylococcaceae</taxon>
        <taxon>Staphylococcus</taxon>
    </lineage>
</organism>
<accession>Q7A3J7</accession>
<comment type="function">
    <text evidence="1">Promotes bacterial attachment to multiple substrates, such as fibronectin (Fn), fibrinogen (Fg), elastin peptides and tropoelastin. This confers to S.aureus the ability to invade endothelial cells. Promotes adherence to and aggregation of activated platelets (By similarity).</text>
</comment>
<comment type="subcellular location">
    <subcellularLocation>
        <location evidence="4">Secreted</location>
        <location evidence="4">Cell wall</location>
        <topology evidence="4">Peptidoglycan-anchor</topology>
    </subcellularLocation>
    <text evidence="2">Anchored to the cell wall by sortase A (By similarity).</text>
</comment>
<name>FNBA_STAAN</name>